<gene>
    <name evidence="1" type="primary">rnz</name>
    <name type="ordered locus">P9301_15351</name>
</gene>
<evidence type="ECO:0000255" key="1">
    <source>
        <dbReference type="HAMAP-Rule" id="MF_01818"/>
    </source>
</evidence>
<comment type="function">
    <text evidence="1">Zinc phosphodiesterase, which displays some tRNA 3'-processing endonuclease activity. Probably involved in tRNA maturation, by removing a 3'-trailer from precursor tRNA.</text>
</comment>
<comment type="catalytic activity">
    <reaction evidence="1">
        <text>Endonucleolytic cleavage of RNA, removing extra 3' nucleotides from tRNA precursor, generating 3' termini of tRNAs. A 3'-hydroxy group is left at the tRNA terminus and a 5'-phosphoryl group is left at the trailer molecule.</text>
        <dbReference type="EC" id="3.1.26.11"/>
    </reaction>
</comment>
<comment type="cofactor">
    <cofactor evidence="1">
        <name>Zn(2+)</name>
        <dbReference type="ChEBI" id="CHEBI:29105"/>
    </cofactor>
    <text evidence="1">Binds 2 Zn(2+) ions.</text>
</comment>
<comment type="subunit">
    <text evidence="1">Homodimer.</text>
</comment>
<comment type="similarity">
    <text evidence="1">Belongs to the RNase Z family.</text>
</comment>
<sequence>MNITFLGTSSGVPSLTRNVSSLALKLSQSSEVWLFDCGEGTQHQIMKSNIKSSQIKKIFITHMHGDHIYGLPGLLATLGLSGNSEGIQIYGPSGLRSFINSSLKSSFCKLSFPLNFVEVENFASENKILFENNKIKVNCACLKHKIPAYGYRVSEKDKPGIFDIKKAESLKIAPGPIYSELQQGKKVVLADGRTFDGKEFCGPPRKGESFVYCTDTVFSESAVSLSKNADLLVHESTFSVEDESMAYEKLHSTTIMAAKTALLSNTKKLIITHLSPRYTNKNAITPSDLLKEAQKVFPNTYLAKDFLTAEIK</sequence>
<name>RNZ_PROM0</name>
<feature type="chain" id="PRO_1000070313" description="Ribonuclease Z">
    <location>
        <begin position="1"/>
        <end position="312"/>
    </location>
</feature>
<feature type="active site" description="Proton acceptor" evidence="1">
    <location>
        <position position="66"/>
    </location>
</feature>
<feature type="binding site" evidence="1">
    <location>
        <position position="62"/>
    </location>
    <ligand>
        <name>Zn(2+)</name>
        <dbReference type="ChEBI" id="CHEBI:29105"/>
        <label>1</label>
        <note>catalytic</note>
    </ligand>
</feature>
<feature type="binding site" evidence="1">
    <location>
        <position position="64"/>
    </location>
    <ligand>
        <name>Zn(2+)</name>
        <dbReference type="ChEBI" id="CHEBI:29105"/>
        <label>1</label>
        <note>catalytic</note>
    </ligand>
</feature>
<feature type="binding site" evidence="1">
    <location>
        <position position="66"/>
    </location>
    <ligand>
        <name>Zn(2+)</name>
        <dbReference type="ChEBI" id="CHEBI:29105"/>
        <label>2</label>
        <note>catalytic</note>
    </ligand>
</feature>
<feature type="binding site" evidence="1">
    <location>
        <position position="67"/>
    </location>
    <ligand>
        <name>Zn(2+)</name>
        <dbReference type="ChEBI" id="CHEBI:29105"/>
        <label>2</label>
        <note>catalytic</note>
    </ligand>
</feature>
<feature type="binding site" evidence="1">
    <location>
        <position position="144"/>
    </location>
    <ligand>
        <name>Zn(2+)</name>
        <dbReference type="ChEBI" id="CHEBI:29105"/>
        <label>1</label>
        <note>catalytic</note>
    </ligand>
</feature>
<feature type="binding site" evidence="1">
    <location>
        <position position="215"/>
    </location>
    <ligand>
        <name>Zn(2+)</name>
        <dbReference type="ChEBI" id="CHEBI:29105"/>
        <label>1</label>
        <note>catalytic</note>
    </ligand>
</feature>
<feature type="binding site" evidence="1">
    <location>
        <position position="215"/>
    </location>
    <ligand>
        <name>Zn(2+)</name>
        <dbReference type="ChEBI" id="CHEBI:29105"/>
        <label>2</label>
        <note>catalytic</note>
    </ligand>
</feature>
<feature type="binding site" evidence="1">
    <location>
        <position position="273"/>
    </location>
    <ligand>
        <name>Zn(2+)</name>
        <dbReference type="ChEBI" id="CHEBI:29105"/>
        <label>2</label>
        <note>catalytic</note>
    </ligand>
</feature>
<proteinExistence type="inferred from homology"/>
<protein>
    <recommendedName>
        <fullName evidence="1">Ribonuclease Z</fullName>
        <shortName evidence="1">RNase Z</shortName>
        <ecNumber evidence="1">3.1.26.11</ecNumber>
    </recommendedName>
    <alternativeName>
        <fullName evidence="1">tRNA 3 endonuclease</fullName>
    </alternativeName>
    <alternativeName>
        <fullName evidence="1">tRNase Z</fullName>
    </alternativeName>
</protein>
<accession>A3PEI3</accession>
<reference key="1">
    <citation type="journal article" date="2007" name="PLoS Genet.">
        <title>Patterns and implications of gene gain and loss in the evolution of Prochlorococcus.</title>
        <authorList>
            <person name="Kettler G.C."/>
            <person name="Martiny A.C."/>
            <person name="Huang K."/>
            <person name="Zucker J."/>
            <person name="Coleman M.L."/>
            <person name="Rodrigue S."/>
            <person name="Chen F."/>
            <person name="Lapidus A."/>
            <person name="Ferriera S."/>
            <person name="Johnson J."/>
            <person name="Steglich C."/>
            <person name="Church G.M."/>
            <person name="Richardson P."/>
            <person name="Chisholm S.W."/>
        </authorList>
    </citation>
    <scope>NUCLEOTIDE SEQUENCE [LARGE SCALE GENOMIC DNA]</scope>
    <source>
        <strain>MIT 9301</strain>
    </source>
</reference>
<organism>
    <name type="scientific">Prochlorococcus marinus (strain MIT 9301)</name>
    <dbReference type="NCBI Taxonomy" id="167546"/>
    <lineage>
        <taxon>Bacteria</taxon>
        <taxon>Bacillati</taxon>
        <taxon>Cyanobacteriota</taxon>
        <taxon>Cyanophyceae</taxon>
        <taxon>Synechococcales</taxon>
        <taxon>Prochlorococcaceae</taxon>
        <taxon>Prochlorococcus</taxon>
    </lineage>
</organism>
<keyword id="KW-0255">Endonuclease</keyword>
<keyword id="KW-0378">Hydrolase</keyword>
<keyword id="KW-0479">Metal-binding</keyword>
<keyword id="KW-0540">Nuclease</keyword>
<keyword id="KW-1185">Reference proteome</keyword>
<keyword id="KW-0819">tRNA processing</keyword>
<keyword id="KW-0862">Zinc</keyword>
<dbReference type="EC" id="3.1.26.11" evidence="1"/>
<dbReference type="EMBL" id="CP000576">
    <property type="protein sequence ID" value="ABO18158.1"/>
    <property type="molecule type" value="Genomic_DNA"/>
</dbReference>
<dbReference type="RefSeq" id="WP_011863462.1">
    <property type="nucleotide sequence ID" value="NC_009091.1"/>
</dbReference>
<dbReference type="SMR" id="A3PEI3"/>
<dbReference type="STRING" id="167546.P9301_15351"/>
<dbReference type="KEGG" id="pmg:P9301_15351"/>
<dbReference type="eggNOG" id="COG1234">
    <property type="taxonomic scope" value="Bacteria"/>
</dbReference>
<dbReference type="HOGENOM" id="CLU_031317_2_0_3"/>
<dbReference type="OrthoDB" id="9800940at2"/>
<dbReference type="Proteomes" id="UP000001430">
    <property type="component" value="Chromosome"/>
</dbReference>
<dbReference type="GO" id="GO:0042781">
    <property type="term" value="F:3'-tRNA processing endoribonuclease activity"/>
    <property type="evidence" value="ECO:0007669"/>
    <property type="project" value="UniProtKB-UniRule"/>
</dbReference>
<dbReference type="GO" id="GO:0008270">
    <property type="term" value="F:zinc ion binding"/>
    <property type="evidence" value="ECO:0007669"/>
    <property type="project" value="UniProtKB-UniRule"/>
</dbReference>
<dbReference type="CDD" id="cd07717">
    <property type="entry name" value="RNaseZ_ZiPD-like_MBL-fold"/>
    <property type="match status" value="1"/>
</dbReference>
<dbReference type="FunFam" id="3.60.15.10:FF:000002">
    <property type="entry name" value="Ribonuclease Z"/>
    <property type="match status" value="1"/>
</dbReference>
<dbReference type="Gene3D" id="3.60.15.10">
    <property type="entry name" value="Ribonuclease Z/Hydroxyacylglutathione hydrolase-like"/>
    <property type="match status" value="1"/>
</dbReference>
<dbReference type="HAMAP" id="MF_01818">
    <property type="entry name" value="RNase_Z_BN"/>
    <property type="match status" value="1"/>
</dbReference>
<dbReference type="InterPro" id="IPR001279">
    <property type="entry name" value="Metallo-B-lactamas"/>
</dbReference>
<dbReference type="InterPro" id="IPR036866">
    <property type="entry name" value="RibonucZ/Hydroxyglut_hydro"/>
</dbReference>
<dbReference type="InterPro" id="IPR013471">
    <property type="entry name" value="RNase_Z/BN"/>
</dbReference>
<dbReference type="NCBIfam" id="NF000801">
    <property type="entry name" value="PRK00055.1-3"/>
    <property type="match status" value="1"/>
</dbReference>
<dbReference type="NCBIfam" id="TIGR02651">
    <property type="entry name" value="RNase_Z"/>
    <property type="match status" value="1"/>
</dbReference>
<dbReference type="PANTHER" id="PTHR46018">
    <property type="entry name" value="ZINC PHOSPHODIESTERASE ELAC PROTEIN 1"/>
    <property type="match status" value="1"/>
</dbReference>
<dbReference type="PANTHER" id="PTHR46018:SF2">
    <property type="entry name" value="ZINC PHOSPHODIESTERASE ELAC PROTEIN 1"/>
    <property type="match status" value="1"/>
</dbReference>
<dbReference type="Pfam" id="PF00753">
    <property type="entry name" value="Lactamase_B"/>
    <property type="match status" value="1"/>
</dbReference>
<dbReference type="SUPFAM" id="SSF56281">
    <property type="entry name" value="Metallo-hydrolase/oxidoreductase"/>
    <property type="match status" value="1"/>
</dbReference>